<dbReference type="EC" id="2.7.10.2"/>
<dbReference type="EMBL" id="X54971">
    <property type="protein sequence ID" value="CAA38715.1"/>
    <property type="molecule type" value="mRNA"/>
</dbReference>
<dbReference type="PIR" id="I51592">
    <property type="entry name" value="I51592"/>
</dbReference>
<dbReference type="SMR" id="P27446"/>
<dbReference type="BRENDA" id="2.7.10.2">
    <property type="organism ID" value="6732"/>
</dbReference>
<dbReference type="GO" id="GO:0005524">
    <property type="term" value="F:ATP binding"/>
    <property type="evidence" value="ECO:0007669"/>
    <property type="project" value="UniProtKB-KW"/>
</dbReference>
<dbReference type="GO" id="GO:0046872">
    <property type="term" value="F:metal ion binding"/>
    <property type="evidence" value="ECO:0007669"/>
    <property type="project" value="UniProtKB-KW"/>
</dbReference>
<dbReference type="GO" id="GO:0004715">
    <property type="term" value="F:non-membrane spanning protein tyrosine kinase activity"/>
    <property type="evidence" value="ECO:0007669"/>
    <property type="project" value="UniProtKB-EC"/>
</dbReference>
<dbReference type="GO" id="GO:0038026">
    <property type="term" value="P:reelin-mediated signaling pathway"/>
    <property type="evidence" value="ECO:0000250"/>
    <property type="project" value="UniProtKB"/>
</dbReference>
<dbReference type="CDD" id="cd14203">
    <property type="entry name" value="PTKc_Src_Fyn_like"/>
    <property type="match status" value="1"/>
</dbReference>
<dbReference type="CDD" id="cd10418">
    <property type="entry name" value="SH2_Src_Fyn_isoform_a_like"/>
    <property type="match status" value="1"/>
</dbReference>
<dbReference type="CDD" id="cd12006">
    <property type="entry name" value="SH3_Fyn_Yrk"/>
    <property type="match status" value="1"/>
</dbReference>
<dbReference type="FunFam" id="1.10.510.10:FF:000553">
    <property type="entry name" value="Tyrosine-protein kinase"/>
    <property type="match status" value="1"/>
</dbReference>
<dbReference type="FunFam" id="3.30.200.20:FF:000016">
    <property type="entry name" value="Tyrosine-protein kinase"/>
    <property type="match status" value="1"/>
</dbReference>
<dbReference type="FunFam" id="2.30.30.40:FF:000182">
    <property type="entry name" value="Tyrosine-protein kinase Fyn"/>
    <property type="match status" value="1"/>
</dbReference>
<dbReference type="FunFam" id="3.30.505.10:FF:000120">
    <property type="entry name" value="Tyrosine-protein kinase Fyn"/>
    <property type="match status" value="1"/>
</dbReference>
<dbReference type="Gene3D" id="3.30.200.20">
    <property type="entry name" value="Phosphorylase Kinase, domain 1"/>
    <property type="match status" value="1"/>
</dbReference>
<dbReference type="Gene3D" id="3.30.505.10">
    <property type="entry name" value="SH2 domain"/>
    <property type="match status" value="1"/>
</dbReference>
<dbReference type="Gene3D" id="2.30.30.40">
    <property type="entry name" value="SH3 Domains"/>
    <property type="match status" value="1"/>
</dbReference>
<dbReference type="Gene3D" id="1.10.510.10">
    <property type="entry name" value="Transferase(Phosphotransferase) domain 1"/>
    <property type="match status" value="1"/>
</dbReference>
<dbReference type="InterPro" id="IPR047924">
    <property type="entry name" value="Fyn/Yrk_SH2"/>
</dbReference>
<dbReference type="InterPro" id="IPR035750">
    <property type="entry name" value="Fyn/Yrk_SH3"/>
</dbReference>
<dbReference type="InterPro" id="IPR011009">
    <property type="entry name" value="Kinase-like_dom_sf"/>
</dbReference>
<dbReference type="InterPro" id="IPR050198">
    <property type="entry name" value="Non-receptor_tyrosine_kinases"/>
</dbReference>
<dbReference type="InterPro" id="IPR000719">
    <property type="entry name" value="Prot_kinase_dom"/>
</dbReference>
<dbReference type="InterPro" id="IPR017441">
    <property type="entry name" value="Protein_kinase_ATP_BS"/>
</dbReference>
<dbReference type="InterPro" id="IPR001245">
    <property type="entry name" value="Ser-Thr/Tyr_kinase_cat_dom"/>
</dbReference>
<dbReference type="InterPro" id="IPR000980">
    <property type="entry name" value="SH2"/>
</dbReference>
<dbReference type="InterPro" id="IPR036860">
    <property type="entry name" value="SH2_dom_sf"/>
</dbReference>
<dbReference type="InterPro" id="IPR036028">
    <property type="entry name" value="SH3-like_dom_sf"/>
</dbReference>
<dbReference type="InterPro" id="IPR001452">
    <property type="entry name" value="SH3_domain"/>
</dbReference>
<dbReference type="InterPro" id="IPR008266">
    <property type="entry name" value="Tyr_kinase_AS"/>
</dbReference>
<dbReference type="InterPro" id="IPR020635">
    <property type="entry name" value="Tyr_kinase_cat_dom"/>
</dbReference>
<dbReference type="PANTHER" id="PTHR24418">
    <property type="entry name" value="TYROSINE-PROTEIN KINASE"/>
    <property type="match status" value="1"/>
</dbReference>
<dbReference type="Pfam" id="PF07714">
    <property type="entry name" value="PK_Tyr_Ser-Thr"/>
    <property type="match status" value="1"/>
</dbReference>
<dbReference type="Pfam" id="PF00017">
    <property type="entry name" value="SH2"/>
    <property type="match status" value="1"/>
</dbReference>
<dbReference type="Pfam" id="PF00018">
    <property type="entry name" value="SH3_1"/>
    <property type="match status" value="1"/>
</dbReference>
<dbReference type="PRINTS" id="PR00401">
    <property type="entry name" value="SH2DOMAIN"/>
</dbReference>
<dbReference type="PRINTS" id="PR00452">
    <property type="entry name" value="SH3DOMAIN"/>
</dbReference>
<dbReference type="PRINTS" id="PR00109">
    <property type="entry name" value="TYRKINASE"/>
</dbReference>
<dbReference type="SMART" id="SM00252">
    <property type="entry name" value="SH2"/>
    <property type="match status" value="1"/>
</dbReference>
<dbReference type="SMART" id="SM00326">
    <property type="entry name" value="SH3"/>
    <property type="match status" value="1"/>
</dbReference>
<dbReference type="SMART" id="SM00219">
    <property type="entry name" value="TyrKc"/>
    <property type="match status" value="1"/>
</dbReference>
<dbReference type="SUPFAM" id="SSF56112">
    <property type="entry name" value="Protein kinase-like (PK-like)"/>
    <property type="match status" value="1"/>
</dbReference>
<dbReference type="SUPFAM" id="SSF55550">
    <property type="entry name" value="SH2 domain"/>
    <property type="match status" value="1"/>
</dbReference>
<dbReference type="SUPFAM" id="SSF50044">
    <property type="entry name" value="SH3-domain"/>
    <property type="match status" value="1"/>
</dbReference>
<dbReference type="PROSITE" id="PS00107">
    <property type="entry name" value="PROTEIN_KINASE_ATP"/>
    <property type="match status" value="1"/>
</dbReference>
<dbReference type="PROSITE" id="PS50011">
    <property type="entry name" value="PROTEIN_KINASE_DOM"/>
    <property type="match status" value="1"/>
</dbReference>
<dbReference type="PROSITE" id="PS00109">
    <property type="entry name" value="PROTEIN_KINASE_TYR"/>
    <property type="match status" value="1"/>
</dbReference>
<dbReference type="PROSITE" id="PS50001">
    <property type="entry name" value="SH2"/>
    <property type="match status" value="1"/>
</dbReference>
<dbReference type="PROSITE" id="PS50002">
    <property type="entry name" value="SH3"/>
    <property type="match status" value="1"/>
</dbReference>
<reference key="1">
    <citation type="journal article" date="1991" name="Oncogene">
        <title>Conservation of structure and expression of the c-yes and fyn genes in lower vertebrates.</title>
        <authorList>
            <person name="Hannig G."/>
            <person name="Ottilie S."/>
            <person name="Schartl M."/>
        </authorList>
    </citation>
    <scope>NUCLEOTIDE SEQUENCE [MRNA]</scope>
    <source>
        <strain>Rio Lancetilla</strain>
    </source>
</reference>
<accession>P27446</accession>
<name>FYN_XIPHE</name>
<organism>
    <name type="scientific">Xiphophorus hellerii</name>
    <name type="common">Green swordtail</name>
    <dbReference type="NCBI Taxonomy" id="8084"/>
    <lineage>
        <taxon>Eukaryota</taxon>
        <taxon>Metazoa</taxon>
        <taxon>Chordata</taxon>
        <taxon>Craniata</taxon>
        <taxon>Vertebrata</taxon>
        <taxon>Euteleostomi</taxon>
        <taxon>Actinopterygii</taxon>
        <taxon>Neopterygii</taxon>
        <taxon>Teleostei</taxon>
        <taxon>Neoteleostei</taxon>
        <taxon>Acanthomorphata</taxon>
        <taxon>Ovalentaria</taxon>
        <taxon>Atherinomorphae</taxon>
        <taxon>Cyprinodontiformes</taxon>
        <taxon>Poeciliidae</taxon>
        <taxon>Poeciliinae</taxon>
        <taxon>Xiphophorus</taxon>
    </lineage>
</organism>
<keyword id="KW-0067">ATP-binding</keyword>
<keyword id="KW-0217">Developmental protein</keyword>
<keyword id="KW-0418">Kinase</keyword>
<keyword id="KW-0449">Lipoprotein</keyword>
<keyword id="KW-0464">Manganese</keyword>
<keyword id="KW-0479">Metal-binding</keyword>
<keyword id="KW-0519">Myristate</keyword>
<keyword id="KW-0547">Nucleotide-binding</keyword>
<keyword id="KW-0564">Palmitate</keyword>
<keyword id="KW-0597">Phosphoprotein</keyword>
<keyword id="KW-0656">Proto-oncogene</keyword>
<keyword id="KW-0727">SH2 domain</keyword>
<keyword id="KW-0728">SH3 domain</keyword>
<keyword id="KW-0808">Transferase</keyword>
<keyword id="KW-0829">Tyrosine-protein kinase</keyword>
<feature type="initiator methionine" description="Removed" evidence="1">
    <location>
        <position position="1"/>
    </location>
</feature>
<feature type="chain" id="PRO_0000088102" description="Tyrosine-protein kinase Fyn">
    <location>
        <begin position="2"/>
        <end position="537"/>
    </location>
</feature>
<feature type="domain" description="SH3" evidence="5">
    <location>
        <begin position="82"/>
        <end position="143"/>
    </location>
</feature>
<feature type="domain" description="SH2" evidence="4">
    <location>
        <begin position="149"/>
        <end position="246"/>
    </location>
</feature>
<feature type="domain" description="Protein kinase" evidence="3">
    <location>
        <begin position="271"/>
        <end position="524"/>
    </location>
</feature>
<feature type="active site" description="Proton acceptor" evidence="3 6">
    <location>
        <position position="390"/>
    </location>
</feature>
<feature type="binding site" evidence="3">
    <location>
        <begin position="277"/>
        <end position="285"/>
    </location>
    <ligand>
        <name>ATP</name>
        <dbReference type="ChEBI" id="CHEBI:30616"/>
    </ligand>
</feature>
<feature type="binding site" evidence="3">
    <location>
        <position position="299"/>
    </location>
    <ligand>
        <name>ATP</name>
        <dbReference type="ChEBI" id="CHEBI:30616"/>
    </ligand>
</feature>
<feature type="modified residue" description="Phosphothreonine; by PKC" evidence="1">
    <location>
        <position position="12"/>
    </location>
</feature>
<feature type="modified residue" description="Phosphotyrosine; by autocatalysis" evidence="1">
    <location>
        <position position="420"/>
    </location>
</feature>
<feature type="modified residue" description="Phosphotyrosine" evidence="1">
    <location>
        <position position="531"/>
    </location>
</feature>
<feature type="lipid moiety-binding region" description="N-myristoyl glycine" evidence="1">
    <location>
        <position position="2"/>
    </location>
</feature>
<feature type="lipid moiety-binding region" description="S-palmitoyl cysteine" evidence="1">
    <location>
        <position position="3"/>
    </location>
</feature>
<feature type="lipid moiety-binding region" description="S-palmitoyl cysteine" evidence="1">
    <location>
        <position position="6"/>
    </location>
</feature>
<evidence type="ECO:0000250" key="1"/>
<evidence type="ECO:0000250" key="2">
    <source>
        <dbReference type="UniProtKB" id="P06241"/>
    </source>
</evidence>
<evidence type="ECO:0000255" key="3">
    <source>
        <dbReference type="PROSITE-ProRule" id="PRU00159"/>
    </source>
</evidence>
<evidence type="ECO:0000255" key="4">
    <source>
        <dbReference type="PROSITE-ProRule" id="PRU00191"/>
    </source>
</evidence>
<evidence type="ECO:0000255" key="5">
    <source>
        <dbReference type="PROSITE-ProRule" id="PRU00192"/>
    </source>
</evidence>
<evidence type="ECO:0000255" key="6">
    <source>
        <dbReference type="PROSITE-ProRule" id="PRU10028"/>
    </source>
</evidence>
<protein>
    <recommendedName>
        <fullName>Tyrosine-protein kinase Fyn</fullName>
        <ecNumber>2.7.10.2</ecNumber>
    </recommendedName>
    <alternativeName>
        <fullName>Proto-oncogene c-Fyn</fullName>
    </alternativeName>
    <alternativeName>
        <fullName>p59-Fyn</fullName>
    </alternativeName>
</protein>
<comment type="function">
    <text evidence="2">Tyrosine-protein kinase implicated in the control of cell growth. Plays a role in the regulation of intracellular calcium levels. Required in brain development and mature brain function with important roles in the regulation of axon growth, axon guidance, and neurite extension (By similarity).</text>
</comment>
<comment type="catalytic activity">
    <reaction evidence="6">
        <text>L-tyrosyl-[protein] + ATP = O-phospho-L-tyrosyl-[protein] + ADP + H(+)</text>
        <dbReference type="Rhea" id="RHEA:10596"/>
        <dbReference type="Rhea" id="RHEA-COMP:10136"/>
        <dbReference type="Rhea" id="RHEA-COMP:20101"/>
        <dbReference type="ChEBI" id="CHEBI:15378"/>
        <dbReference type="ChEBI" id="CHEBI:30616"/>
        <dbReference type="ChEBI" id="CHEBI:46858"/>
        <dbReference type="ChEBI" id="CHEBI:61978"/>
        <dbReference type="ChEBI" id="CHEBI:456216"/>
        <dbReference type="EC" id="2.7.10.2"/>
    </reaction>
</comment>
<comment type="cofactor">
    <cofactor>
        <name>Mn(2+)</name>
        <dbReference type="ChEBI" id="CHEBI:29035"/>
    </cofactor>
</comment>
<comment type="activity regulation">
    <text evidence="2">Inhibited by phosphorylation of Tyr-531 by leukocyte common antigen and activated by dephosphorylation of this site.</text>
</comment>
<comment type="subunit">
    <text>Associates through its SH3 domain, to the p85 subunit of phosphatidylinositol 3-kinase.</text>
</comment>
<comment type="similarity">
    <text evidence="3">Belongs to the protein kinase superfamily. Tyr protein kinase family. SRC subfamily.</text>
</comment>
<sequence>MGCVQCKDKEATKLTDDRDASISQGAGYRYGADPTPQHYPSFGVTAIPNYNNFHAPVGQGVTVFGGVNTSSHTGTLRTRGGTGVTLFVALYDYEARTEDDLSFRKGERFQILNSTEGDWWDARSLTTGGSGYIPSNYVAPVDSIQAEDWYFGKLGRKDAERQLLSTGNPRGTYLIRESETTKGAFSLSIRDWDDEKGDHVKHYKIRKLDSGGYYITTRAQFDTLQQLVQHYSDRAAGLCCRLVVPCHKGMPRLADLSVKTKDVWEIPRESLQLIKRLGNGQFGEVWMGTWNGTTKVAVKTLKPGTMSPESFLEEAQIMKKLRHDKLVQLYAVVSEEPIYIVTEYMSKGSLLDFLKDGEGRALKLPNLVDMAAQVAAGMAYIERMNYIHRDLRSANILVGDNLVCKIADFGLARLIEDNEYTARQGAKFPIKWTAPEAALYGRFTIKSDVWSFGILLTELVTKGRVPYPGMNNREVLEQVERGYRMPCPQDCPASLHELMLQCWKKDPEERPTFEYLQAFLEDYFTATEPQYQPGDNL</sequence>
<proteinExistence type="evidence at transcript level"/>
<gene>
    <name type="primary">fyn</name>
</gene>